<keyword id="KW-0067">ATP-binding</keyword>
<keyword id="KW-0143">Chaperone</keyword>
<keyword id="KW-0479">Metal-binding</keyword>
<keyword id="KW-0547">Nucleotide-binding</keyword>
<keyword id="KW-1185">Reference proteome</keyword>
<keyword id="KW-0862">Zinc</keyword>
<evidence type="ECO:0000255" key="1">
    <source>
        <dbReference type="HAMAP-Rule" id="MF_00175"/>
    </source>
</evidence>
<evidence type="ECO:0000255" key="2">
    <source>
        <dbReference type="PROSITE-ProRule" id="PRU01250"/>
    </source>
</evidence>
<name>CLPX_BRASO</name>
<organism>
    <name type="scientific">Bradyrhizobium sp. (strain ORS 278)</name>
    <dbReference type="NCBI Taxonomy" id="114615"/>
    <lineage>
        <taxon>Bacteria</taxon>
        <taxon>Pseudomonadati</taxon>
        <taxon>Pseudomonadota</taxon>
        <taxon>Alphaproteobacteria</taxon>
        <taxon>Hyphomicrobiales</taxon>
        <taxon>Nitrobacteraceae</taxon>
        <taxon>Bradyrhizobium</taxon>
    </lineage>
</organism>
<comment type="function">
    <text evidence="1">ATP-dependent specificity component of the Clp protease. It directs the protease to specific substrates. Can perform chaperone functions in the absence of ClpP.</text>
</comment>
<comment type="subunit">
    <text evidence="1">Component of the ClpX-ClpP complex. Forms a hexameric ring that, in the presence of ATP, binds to fourteen ClpP subunits assembled into a disk-like structure with a central cavity, resembling the structure of eukaryotic proteasomes.</text>
</comment>
<comment type="similarity">
    <text evidence="1">Belongs to the ClpX chaperone family.</text>
</comment>
<feature type="chain" id="PRO_1000024522" description="ATP-dependent Clp protease ATP-binding subunit ClpX">
    <location>
        <begin position="1"/>
        <end position="424"/>
    </location>
</feature>
<feature type="domain" description="ClpX-type ZB" evidence="2">
    <location>
        <begin position="3"/>
        <end position="56"/>
    </location>
</feature>
<feature type="binding site" evidence="2">
    <location>
        <position position="15"/>
    </location>
    <ligand>
        <name>Zn(2+)</name>
        <dbReference type="ChEBI" id="CHEBI:29105"/>
    </ligand>
</feature>
<feature type="binding site" evidence="2">
    <location>
        <position position="18"/>
    </location>
    <ligand>
        <name>Zn(2+)</name>
        <dbReference type="ChEBI" id="CHEBI:29105"/>
    </ligand>
</feature>
<feature type="binding site" evidence="2">
    <location>
        <position position="37"/>
    </location>
    <ligand>
        <name>Zn(2+)</name>
        <dbReference type="ChEBI" id="CHEBI:29105"/>
    </ligand>
</feature>
<feature type="binding site" evidence="2">
    <location>
        <position position="40"/>
    </location>
    <ligand>
        <name>Zn(2+)</name>
        <dbReference type="ChEBI" id="CHEBI:29105"/>
    </ligand>
</feature>
<feature type="binding site" evidence="1">
    <location>
        <begin position="119"/>
        <end position="126"/>
    </location>
    <ligand>
        <name>ATP</name>
        <dbReference type="ChEBI" id="CHEBI:30616"/>
    </ligand>
</feature>
<proteinExistence type="inferred from homology"/>
<protein>
    <recommendedName>
        <fullName evidence="1">ATP-dependent Clp protease ATP-binding subunit ClpX</fullName>
    </recommendedName>
</protein>
<accession>A4YVM3</accession>
<dbReference type="EMBL" id="CU234118">
    <property type="protein sequence ID" value="CAL77949.1"/>
    <property type="molecule type" value="Genomic_DNA"/>
</dbReference>
<dbReference type="RefSeq" id="WP_011927074.1">
    <property type="nucleotide sequence ID" value="NC_009445.1"/>
</dbReference>
<dbReference type="SMR" id="A4YVM3"/>
<dbReference type="STRING" id="114615.BRADO4197"/>
<dbReference type="KEGG" id="bra:BRADO4197"/>
<dbReference type="eggNOG" id="COG1219">
    <property type="taxonomic scope" value="Bacteria"/>
</dbReference>
<dbReference type="HOGENOM" id="CLU_014218_8_2_5"/>
<dbReference type="OrthoDB" id="9804062at2"/>
<dbReference type="Proteomes" id="UP000001994">
    <property type="component" value="Chromosome"/>
</dbReference>
<dbReference type="GO" id="GO:0009376">
    <property type="term" value="C:HslUV protease complex"/>
    <property type="evidence" value="ECO:0007669"/>
    <property type="project" value="TreeGrafter"/>
</dbReference>
<dbReference type="GO" id="GO:0005524">
    <property type="term" value="F:ATP binding"/>
    <property type="evidence" value="ECO:0007669"/>
    <property type="project" value="UniProtKB-UniRule"/>
</dbReference>
<dbReference type="GO" id="GO:0016887">
    <property type="term" value="F:ATP hydrolysis activity"/>
    <property type="evidence" value="ECO:0007669"/>
    <property type="project" value="InterPro"/>
</dbReference>
<dbReference type="GO" id="GO:0140662">
    <property type="term" value="F:ATP-dependent protein folding chaperone"/>
    <property type="evidence" value="ECO:0007669"/>
    <property type="project" value="InterPro"/>
</dbReference>
<dbReference type="GO" id="GO:0046983">
    <property type="term" value="F:protein dimerization activity"/>
    <property type="evidence" value="ECO:0007669"/>
    <property type="project" value="InterPro"/>
</dbReference>
<dbReference type="GO" id="GO:0051082">
    <property type="term" value="F:unfolded protein binding"/>
    <property type="evidence" value="ECO:0007669"/>
    <property type="project" value="UniProtKB-UniRule"/>
</dbReference>
<dbReference type="GO" id="GO:0008270">
    <property type="term" value="F:zinc ion binding"/>
    <property type="evidence" value="ECO:0007669"/>
    <property type="project" value="InterPro"/>
</dbReference>
<dbReference type="GO" id="GO:0051301">
    <property type="term" value="P:cell division"/>
    <property type="evidence" value="ECO:0007669"/>
    <property type="project" value="TreeGrafter"/>
</dbReference>
<dbReference type="GO" id="GO:0051603">
    <property type="term" value="P:proteolysis involved in protein catabolic process"/>
    <property type="evidence" value="ECO:0007669"/>
    <property type="project" value="TreeGrafter"/>
</dbReference>
<dbReference type="CDD" id="cd19497">
    <property type="entry name" value="RecA-like_ClpX"/>
    <property type="match status" value="1"/>
</dbReference>
<dbReference type="FunFam" id="1.10.8.60:FF:000002">
    <property type="entry name" value="ATP-dependent Clp protease ATP-binding subunit ClpX"/>
    <property type="match status" value="1"/>
</dbReference>
<dbReference type="FunFam" id="3.40.50.300:FF:000005">
    <property type="entry name" value="ATP-dependent Clp protease ATP-binding subunit ClpX"/>
    <property type="match status" value="1"/>
</dbReference>
<dbReference type="Gene3D" id="1.10.8.60">
    <property type="match status" value="1"/>
</dbReference>
<dbReference type="Gene3D" id="6.20.220.10">
    <property type="entry name" value="ClpX chaperone, C4-type zinc finger domain"/>
    <property type="match status" value="1"/>
</dbReference>
<dbReference type="Gene3D" id="3.40.50.300">
    <property type="entry name" value="P-loop containing nucleotide triphosphate hydrolases"/>
    <property type="match status" value="1"/>
</dbReference>
<dbReference type="HAMAP" id="MF_00175">
    <property type="entry name" value="ClpX"/>
    <property type="match status" value="1"/>
</dbReference>
<dbReference type="InterPro" id="IPR003593">
    <property type="entry name" value="AAA+_ATPase"/>
</dbReference>
<dbReference type="InterPro" id="IPR050052">
    <property type="entry name" value="ATP-dep_Clp_protease_ClpX"/>
</dbReference>
<dbReference type="InterPro" id="IPR003959">
    <property type="entry name" value="ATPase_AAA_core"/>
</dbReference>
<dbReference type="InterPro" id="IPR019489">
    <property type="entry name" value="Clp_ATPase_C"/>
</dbReference>
<dbReference type="InterPro" id="IPR004487">
    <property type="entry name" value="Clp_protease_ATP-bd_su_ClpX"/>
</dbReference>
<dbReference type="InterPro" id="IPR046425">
    <property type="entry name" value="ClpX_bact"/>
</dbReference>
<dbReference type="InterPro" id="IPR027417">
    <property type="entry name" value="P-loop_NTPase"/>
</dbReference>
<dbReference type="InterPro" id="IPR010603">
    <property type="entry name" value="Znf_CppX_C4"/>
</dbReference>
<dbReference type="InterPro" id="IPR038366">
    <property type="entry name" value="Znf_CppX_C4_sf"/>
</dbReference>
<dbReference type="NCBIfam" id="TIGR00382">
    <property type="entry name" value="clpX"/>
    <property type="match status" value="1"/>
</dbReference>
<dbReference type="NCBIfam" id="NF003745">
    <property type="entry name" value="PRK05342.1"/>
    <property type="match status" value="1"/>
</dbReference>
<dbReference type="PANTHER" id="PTHR48102:SF7">
    <property type="entry name" value="ATP-DEPENDENT CLP PROTEASE ATP-BINDING SUBUNIT CLPX-LIKE, MITOCHONDRIAL"/>
    <property type="match status" value="1"/>
</dbReference>
<dbReference type="PANTHER" id="PTHR48102">
    <property type="entry name" value="ATP-DEPENDENT CLP PROTEASE ATP-BINDING SUBUNIT CLPX-LIKE, MITOCHONDRIAL-RELATED"/>
    <property type="match status" value="1"/>
</dbReference>
<dbReference type="Pfam" id="PF07724">
    <property type="entry name" value="AAA_2"/>
    <property type="match status" value="1"/>
</dbReference>
<dbReference type="Pfam" id="PF10431">
    <property type="entry name" value="ClpB_D2-small"/>
    <property type="match status" value="1"/>
</dbReference>
<dbReference type="Pfam" id="PF06689">
    <property type="entry name" value="zf-C4_ClpX"/>
    <property type="match status" value="1"/>
</dbReference>
<dbReference type="SMART" id="SM00382">
    <property type="entry name" value="AAA"/>
    <property type="match status" value="1"/>
</dbReference>
<dbReference type="SMART" id="SM01086">
    <property type="entry name" value="ClpB_D2-small"/>
    <property type="match status" value="1"/>
</dbReference>
<dbReference type="SMART" id="SM00994">
    <property type="entry name" value="zf-C4_ClpX"/>
    <property type="match status" value="1"/>
</dbReference>
<dbReference type="SUPFAM" id="SSF57716">
    <property type="entry name" value="Glucocorticoid receptor-like (DNA-binding domain)"/>
    <property type="match status" value="1"/>
</dbReference>
<dbReference type="SUPFAM" id="SSF52540">
    <property type="entry name" value="P-loop containing nucleoside triphosphate hydrolases"/>
    <property type="match status" value="1"/>
</dbReference>
<dbReference type="PROSITE" id="PS51902">
    <property type="entry name" value="CLPX_ZB"/>
    <property type="match status" value="1"/>
</dbReference>
<reference key="1">
    <citation type="journal article" date="2007" name="Science">
        <title>Legumes symbioses: absence of nod genes in photosynthetic bradyrhizobia.</title>
        <authorList>
            <person name="Giraud E."/>
            <person name="Moulin L."/>
            <person name="Vallenet D."/>
            <person name="Barbe V."/>
            <person name="Cytryn E."/>
            <person name="Avarre J.-C."/>
            <person name="Jaubert M."/>
            <person name="Simon D."/>
            <person name="Cartieaux F."/>
            <person name="Prin Y."/>
            <person name="Bena G."/>
            <person name="Hannibal L."/>
            <person name="Fardoux J."/>
            <person name="Kojadinovic M."/>
            <person name="Vuillet L."/>
            <person name="Lajus A."/>
            <person name="Cruveiller S."/>
            <person name="Rouy Z."/>
            <person name="Mangenot S."/>
            <person name="Segurens B."/>
            <person name="Dossat C."/>
            <person name="Franck W.L."/>
            <person name="Chang W.-S."/>
            <person name="Saunders E."/>
            <person name="Bruce D."/>
            <person name="Richardson P."/>
            <person name="Normand P."/>
            <person name="Dreyfus B."/>
            <person name="Pignol D."/>
            <person name="Stacey G."/>
            <person name="Emerich D."/>
            <person name="Vermeglio A."/>
            <person name="Medigue C."/>
            <person name="Sadowsky M."/>
        </authorList>
    </citation>
    <scope>NUCLEOTIDE SEQUENCE [LARGE SCALE GENOMIC DNA]</scope>
    <source>
        <strain>ORS 278</strain>
    </source>
</reference>
<sequence length="424" mass="46664">MSKVGNGDAKNTLYCSFCGKSQHEVRKLIAGPTVFICDECVELCMDIIREENKSSLVKSRDGIPTPKEICKVLDDYVIGQNHAKKVLSVAVHNHYKRLNHQTKHSDVELAKSNILLIGPTGSGKTLLAQTLARILDVPFTMADATTLTEAGYVGEDVENIILKLLQAADYNVERAQRGIVYIDEIDKISRKSDNPSITRDVSGEGVQQALLKIMEGTVASVPPQGGRKHPQQEFLQVDTTNILFICGGAFSGLEKIISARGRSTSIGFAAQVLAPEDRRTGEIFRHVEPEDLLKYGLIPEFVGRLPVVATLEDLDENSLKKILTEPKNALVKQYQRLFEMENIELTFADEALGAVSRKAIERKTGARGLRSILESILLETMFDLPGLEGVEEVVISREVVEGTARPLYIYADRSDRAVESSASA</sequence>
<gene>
    <name evidence="1" type="primary">clpX</name>
    <name type="ordered locus">BRADO4197</name>
</gene>